<accession>O18921</accession>
<comment type="function">
    <text evidence="2">Catalyzes the interconversion of N-acetylglucosamine to N-acetylmannosamine. Involved in the N-glycolylneuraminic acid (Neu5Gc) degradation pathway.</text>
</comment>
<comment type="catalytic activity">
    <reaction evidence="1">
        <text>an N-acyl-D-glucosamine = an N-acyl-D-mannosamine</text>
        <dbReference type="Rhea" id="RHEA:19033"/>
        <dbReference type="ChEBI" id="CHEBI:16062"/>
        <dbReference type="ChEBI" id="CHEBI:17274"/>
        <dbReference type="EC" id="5.1.3.8"/>
    </reaction>
    <physiologicalReaction direction="left-to-right" evidence="1">
        <dbReference type="Rhea" id="RHEA:19034"/>
    </physiologicalReaction>
    <physiologicalReaction direction="right-to-left" evidence="1">
        <dbReference type="Rhea" id="RHEA:19035"/>
    </physiologicalReaction>
</comment>
<comment type="pathway">
    <text evidence="1">Amino-sugar metabolism; N-acetylneuraminate degradation.</text>
</comment>
<comment type="subunit">
    <text evidence="1">Homodimer. Forms a heterodimer with renin and inhibits its activity.</text>
</comment>
<comment type="similarity">
    <text evidence="3">Belongs to the N-acylglucosamine 2-epimerase family.</text>
</comment>
<sequence length="35" mass="3955">LNLVDQLGEADEELAGTYAELGDWCAQRILQHVQR</sequence>
<dbReference type="EC" id="5.1.3.8"/>
<dbReference type="EMBL" id="AF033014">
    <property type="protein sequence ID" value="AAB86966.1"/>
    <property type="molecule type" value="Genomic_DNA"/>
</dbReference>
<dbReference type="SMR" id="O18921"/>
<dbReference type="PaxDb" id="9612-ENSCAFP00000028704"/>
<dbReference type="eggNOG" id="ENOG502QSDA">
    <property type="taxonomic scope" value="Eukaryota"/>
</dbReference>
<dbReference type="InParanoid" id="O18921"/>
<dbReference type="UniPathway" id="UPA00629"/>
<dbReference type="Proteomes" id="UP000002254">
    <property type="component" value="Unplaced"/>
</dbReference>
<dbReference type="Proteomes" id="UP000694429">
    <property type="component" value="Unplaced"/>
</dbReference>
<dbReference type="Proteomes" id="UP000694542">
    <property type="component" value="Unplaced"/>
</dbReference>
<dbReference type="Proteomes" id="UP000805418">
    <property type="component" value="Unplaced"/>
</dbReference>
<dbReference type="GO" id="GO:0042802">
    <property type="term" value="F:identical protein binding"/>
    <property type="evidence" value="ECO:0000250"/>
    <property type="project" value="UniProtKB"/>
</dbReference>
<dbReference type="GO" id="GO:0050121">
    <property type="term" value="F:N-acylglucosamine 2-epimerase activity"/>
    <property type="evidence" value="ECO:0000250"/>
    <property type="project" value="UniProtKB"/>
</dbReference>
<dbReference type="GO" id="GO:0030414">
    <property type="term" value="F:peptidase inhibitor activity"/>
    <property type="evidence" value="ECO:0000250"/>
    <property type="project" value="UniProtKB"/>
</dbReference>
<dbReference type="GO" id="GO:0019262">
    <property type="term" value="P:N-acetylneuraminate catabolic process"/>
    <property type="evidence" value="ECO:0007669"/>
    <property type="project" value="UniProtKB-UniPathway"/>
</dbReference>
<gene>
    <name evidence="1" type="primary">RENBP</name>
</gene>
<proteinExistence type="inferred from homology"/>
<evidence type="ECO:0000250" key="1">
    <source>
        <dbReference type="UniProtKB" id="P51606"/>
    </source>
</evidence>
<evidence type="ECO:0000250" key="2">
    <source>
        <dbReference type="UniProtKB" id="P82343"/>
    </source>
</evidence>
<evidence type="ECO:0000255" key="3"/>
<evidence type="ECO:0000303" key="4">
    <source>
    </source>
</evidence>
<evidence type="ECO:0000305" key="5"/>
<protein>
    <recommendedName>
        <fullName>N-acylglucosamine 2-epimerase</fullName>
        <shortName>AGE</shortName>
        <ecNumber>5.1.3.8</ecNumber>
    </recommendedName>
    <alternativeName>
        <fullName>GlcNAc 2-epimerase</fullName>
    </alternativeName>
    <alternativeName>
        <fullName>N-acetyl-D-glucosamine 2-epimerase</fullName>
    </alternativeName>
    <alternativeName>
        <fullName>Renin-binding protein</fullName>
        <shortName>RnBP</shortName>
    </alternativeName>
</protein>
<name>RENBP_CANLF</name>
<reference evidence="5" key="1">
    <citation type="journal article" date="1998" name="Anim. Genet.">
        <title>A BsII PCR/RFLP in the renin binding protein (RnBP) gene on canine chromosome X.</title>
        <authorList>
            <person name="Stoy S.J."/>
            <person name="Shibuya H."/>
            <person name="O'Brien D."/>
            <person name="Johnson G.S."/>
        </authorList>
    </citation>
    <scope>NUCLEOTIDE SEQUENCE [GENOMIC DNA]</scope>
</reference>
<feature type="chain" id="PRO_0000208948" description="N-acylglucosamine 2-epimerase">
    <location>
        <begin position="1" status="less than"/>
        <end position="35" status="greater than"/>
    </location>
</feature>
<feature type="region of interest" description="Leucine-zipper">
    <location>
        <begin position="1" status="less than"/>
        <end position="21"/>
    </location>
</feature>
<feature type="non-terminal residue" evidence="4">
    <location>
        <position position="1"/>
    </location>
</feature>
<feature type="non-terminal residue" evidence="4">
    <location>
        <position position="35"/>
    </location>
</feature>
<organism>
    <name type="scientific">Canis lupus familiaris</name>
    <name type="common">Dog</name>
    <name type="synonym">Canis familiaris</name>
    <dbReference type="NCBI Taxonomy" id="9615"/>
    <lineage>
        <taxon>Eukaryota</taxon>
        <taxon>Metazoa</taxon>
        <taxon>Chordata</taxon>
        <taxon>Craniata</taxon>
        <taxon>Vertebrata</taxon>
        <taxon>Euteleostomi</taxon>
        <taxon>Mammalia</taxon>
        <taxon>Eutheria</taxon>
        <taxon>Laurasiatheria</taxon>
        <taxon>Carnivora</taxon>
        <taxon>Caniformia</taxon>
        <taxon>Canidae</taxon>
        <taxon>Canis</taxon>
    </lineage>
</organism>
<keyword id="KW-0413">Isomerase</keyword>
<keyword id="KW-1185">Reference proteome</keyword>